<accession>Q2G9Z8</accession>
<sequence>MAHEVKGEILGMLGEFKKFIARGNVLDLAVGVIIGGAFGKIVTSLTESVIMPVVGWLTGGVDFTRYFVRLGPVPADFKGDPTSYAELKAAGVPMIGYGDFITQAVNFVIVAFIIFLIVKAVNRMFEKPEEAPAAPSGPTEVELLAEIRDALKAKG</sequence>
<dbReference type="EMBL" id="CP000248">
    <property type="protein sequence ID" value="ABD25325.1"/>
    <property type="molecule type" value="Genomic_DNA"/>
</dbReference>
<dbReference type="RefSeq" id="WP_011444539.1">
    <property type="nucleotide sequence ID" value="NC_007794.1"/>
</dbReference>
<dbReference type="SMR" id="Q2G9Z8"/>
<dbReference type="STRING" id="279238.Saro_0880"/>
<dbReference type="KEGG" id="nar:Saro_0880"/>
<dbReference type="eggNOG" id="COG1970">
    <property type="taxonomic scope" value="Bacteria"/>
</dbReference>
<dbReference type="HOGENOM" id="CLU_095787_0_1_5"/>
<dbReference type="Proteomes" id="UP000009134">
    <property type="component" value="Chromosome"/>
</dbReference>
<dbReference type="GO" id="GO:0005886">
    <property type="term" value="C:plasma membrane"/>
    <property type="evidence" value="ECO:0007669"/>
    <property type="project" value="UniProtKB-SubCell"/>
</dbReference>
<dbReference type="GO" id="GO:0008381">
    <property type="term" value="F:mechanosensitive monoatomic ion channel activity"/>
    <property type="evidence" value="ECO:0007669"/>
    <property type="project" value="UniProtKB-UniRule"/>
</dbReference>
<dbReference type="Gene3D" id="1.10.1200.120">
    <property type="entry name" value="Large-conductance mechanosensitive channel, MscL, domain 1"/>
    <property type="match status" value="1"/>
</dbReference>
<dbReference type="HAMAP" id="MF_00115">
    <property type="entry name" value="MscL"/>
    <property type="match status" value="1"/>
</dbReference>
<dbReference type="InterPro" id="IPR019823">
    <property type="entry name" value="Mechanosensitive_channel_CS"/>
</dbReference>
<dbReference type="InterPro" id="IPR001185">
    <property type="entry name" value="MS_channel"/>
</dbReference>
<dbReference type="InterPro" id="IPR037673">
    <property type="entry name" value="MSC/AndL"/>
</dbReference>
<dbReference type="InterPro" id="IPR036019">
    <property type="entry name" value="MscL_channel"/>
</dbReference>
<dbReference type="NCBIfam" id="TIGR00220">
    <property type="entry name" value="mscL"/>
    <property type="match status" value="1"/>
</dbReference>
<dbReference type="NCBIfam" id="NF001843">
    <property type="entry name" value="PRK00567.1-4"/>
    <property type="match status" value="1"/>
</dbReference>
<dbReference type="NCBIfam" id="NF010557">
    <property type="entry name" value="PRK13952.1"/>
    <property type="match status" value="1"/>
</dbReference>
<dbReference type="PANTHER" id="PTHR30266:SF2">
    <property type="entry name" value="LARGE-CONDUCTANCE MECHANOSENSITIVE CHANNEL"/>
    <property type="match status" value="1"/>
</dbReference>
<dbReference type="PANTHER" id="PTHR30266">
    <property type="entry name" value="MECHANOSENSITIVE CHANNEL MSCL"/>
    <property type="match status" value="1"/>
</dbReference>
<dbReference type="Pfam" id="PF01741">
    <property type="entry name" value="MscL"/>
    <property type="match status" value="1"/>
</dbReference>
<dbReference type="PRINTS" id="PR01264">
    <property type="entry name" value="MECHCHANNEL"/>
</dbReference>
<dbReference type="SUPFAM" id="SSF81330">
    <property type="entry name" value="Gated mechanosensitive channel"/>
    <property type="match status" value="1"/>
</dbReference>
<dbReference type="PROSITE" id="PS01327">
    <property type="entry name" value="MSCL"/>
    <property type="match status" value="1"/>
</dbReference>
<gene>
    <name evidence="1" type="primary">mscL</name>
    <name type="ordered locus">Saro_0880</name>
</gene>
<feature type="chain" id="PRO_0000238014" description="Large-conductance mechanosensitive channel">
    <location>
        <begin position="1"/>
        <end position="155"/>
    </location>
</feature>
<feature type="transmembrane region" description="Helical" evidence="1">
    <location>
        <begin position="25"/>
        <end position="45"/>
    </location>
</feature>
<feature type="transmembrane region" description="Helical" evidence="1">
    <location>
        <begin position="98"/>
        <end position="118"/>
    </location>
</feature>
<evidence type="ECO:0000255" key="1">
    <source>
        <dbReference type="HAMAP-Rule" id="MF_00115"/>
    </source>
</evidence>
<organism>
    <name type="scientific">Novosphingobium aromaticivorans (strain ATCC 700278 / DSM 12444 / CCUG 56034 / CIP 105152 / NBRC 16084 / F199)</name>
    <dbReference type="NCBI Taxonomy" id="279238"/>
    <lineage>
        <taxon>Bacteria</taxon>
        <taxon>Pseudomonadati</taxon>
        <taxon>Pseudomonadota</taxon>
        <taxon>Alphaproteobacteria</taxon>
        <taxon>Sphingomonadales</taxon>
        <taxon>Sphingomonadaceae</taxon>
        <taxon>Novosphingobium</taxon>
    </lineage>
</organism>
<name>MSCL_NOVAD</name>
<keyword id="KW-0997">Cell inner membrane</keyword>
<keyword id="KW-1003">Cell membrane</keyword>
<keyword id="KW-0407">Ion channel</keyword>
<keyword id="KW-0406">Ion transport</keyword>
<keyword id="KW-0472">Membrane</keyword>
<keyword id="KW-1185">Reference proteome</keyword>
<keyword id="KW-0812">Transmembrane</keyword>
<keyword id="KW-1133">Transmembrane helix</keyword>
<keyword id="KW-0813">Transport</keyword>
<reference key="1">
    <citation type="submission" date="2006-01" db="EMBL/GenBank/DDBJ databases">
        <title>Complete sequence of Novosphingobium aromaticivorans DSM 12444.</title>
        <authorList>
            <consortium name="US DOE Joint Genome Institute"/>
            <person name="Copeland A."/>
            <person name="Lucas S."/>
            <person name="Lapidus A."/>
            <person name="Barry K."/>
            <person name="Detter J.C."/>
            <person name="Glavina T."/>
            <person name="Hammon N."/>
            <person name="Israni S."/>
            <person name="Pitluck S."/>
            <person name="Chain P."/>
            <person name="Malfatti S."/>
            <person name="Shin M."/>
            <person name="Vergez L."/>
            <person name="Schmutz J."/>
            <person name="Larimer F."/>
            <person name="Land M."/>
            <person name="Kyrpides N."/>
            <person name="Ivanova N."/>
            <person name="Fredrickson J."/>
            <person name="Balkwill D."/>
            <person name="Romine M.F."/>
            <person name="Richardson P."/>
        </authorList>
    </citation>
    <scope>NUCLEOTIDE SEQUENCE [LARGE SCALE GENOMIC DNA]</scope>
    <source>
        <strain>ATCC 700278 / DSM 12444 / CCUG 56034 / CIP 105152 / NBRC 16084 / F199</strain>
    </source>
</reference>
<proteinExistence type="inferred from homology"/>
<comment type="function">
    <text evidence="1">Channel that opens in response to stretch forces in the membrane lipid bilayer. May participate in the regulation of osmotic pressure changes within the cell.</text>
</comment>
<comment type="subunit">
    <text evidence="1">Homopentamer.</text>
</comment>
<comment type="subcellular location">
    <subcellularLocation>
        <location evidence="1">Cell inner membrane</location>
        <topology evidence="1">Multi-pass membrane protein</topology>
    </subcellularLocation>
</comment>
<comment type="similarity">
    <text evidence="1">Belongs to the MscL family.</text>
</comment>
<protein>
    <recommendedName>
        <fullName evidence="1">Large-conductance mechanosensitive channel</fullName>
    </recommendedName>
</protein>